<dbReference type="EC" id="1.14.14.1" evidence="3"/>
<dbReference type="EC" id="4.2.1.152" evidence="3"/>
<dbReference type="PIR" id="C37222">
    <property type="entry name" value="C37222"/>
</dbReference>
<dbReference type="SMR" id="P56590"/>
<dbReference type="FunCoup" id="P56590">
    <property type="interactions" value="60"/>
</dbReference>
<dbReference type="STRING" id="9615.ENSCAFP00000065547"/>
<dbReference type="GlyCosmos" id="P56590">
    <property type="glycosylation" value="1 site, No reported glycans"/>
</dbReference>
<dbReference type="PaxDb" id="9612-ENSCAFP00000026483"/>
<dbReference type="eggNOG" id="KOG0156">
    <property type="taxonomic scope" value="Eukaryota"/>
</dbReference>
<dbReference type="InParanoid" id="P56590"/>
<dbReference type="OrthoDB" id="1055148at2759"/>
<dbReference type="UniPathway" id="UPA00199"/>
<dbReference type="UniPathway" id="UPA00912"/>
<dbReference type="Proteomes" id="UP000002254">
    <property type="component" value="Unplaced"/>
</dbReference>
<dbReference type="Proteomes" id="UP000694429">
    <property type="component" value="Unplaced"/>
</dbReference>
<dbReference type="Proteomes" id="UP000694542">
    <property type="component" value="Unplaced"/>
</dbReference>
<dbReference type="Proteomes" id="UP000805418">
    <property type="component" value="Unplaced"/>
</dbReference>
<dbReference type="GO" id="GO:0005789">
    <property type="term" value="C:endoplasmic reticulum membrane"/>
    <property type="evidence" value="ECO:0007669"/>
    <property type="project" value="UniProtKB-SubCell"/>
</dbReference>
<dbReference type="GO" id="GO:0043231">
    <property type="term" value="C:intracellular membrane-bounded organelle"/>
    <property type="evidence" value="ECO:0000318"/>
    <property type="project" value="GO_Central"/>
</dbReference>
<dbReference type="GO" id="GO:0005743">
    <property type="term" value="C:mitochondrial inner membrane"/>
    <property type="evidence" value="ECO:0000250"/>
    <property type="project" value="UniProtKB"/>
</dbReference>
<dbReference type="GO" id="GO:0101020">
    <property type="term" value="F:estrogen 16-alpha-hydroxylase activity"/>
    <property type="evidence" value="ECO:0000250"/>
    <property type="project" value="UniProtKB"/>
</dbReference>
<dbReference type="GO" id="GO:0101021">
    <property type="term" value="F:estrogen 2-hydroxylase activity"/>
    <property type="evidence" value="ECO:0000250"/>
    <property type="project" value="UniProtKB"/>
</dbReference>
<dbReference type="GO" id="GO:0020037">
    <property type="term" value="F:heme binding"/>
    <property type="evidence" value="ECO:0007669"/>
    <property type="project" value="InterPro"/>
</dbReference>
<dbReference type="GO" id="GO:0030544">
    <property type="term" value="F:Hsp70 protein binding"/>
    <property type="evidence" value="ECO:0000250"/>
    <property type="project" value="UniProtKB"/>
</dbReference>
<dbReference type="GO" id="GO:0051879">
    <property type="term" value="F:Hsp90 protein binding"/>
    <property type="evidence" value="ECO:0000250"/>
    <property type="project" value="UniProtKB"/>
</dbReference>
<dbReference type="GO" id="GO:0106256">
    <property type="term" value="F:hydroperoxy icosatetraenoate dehydratase activity"/>
    <property type="evidence" value="ECO:0007669"/>
    <property type="project" value="UniProtKB-EC"/>
</dbReference>
<dbReference type="GO" id="GO:0005506">
    <property type="term" value="F:iron ion binding"/>
    <property type="evidence" value="ECO:0007669"/>
    <property type="project" value="InterPro"/>
</dbReference>
<dbReference type="GO" id="GO:0004497">
    <property type="term" value="F:monooxygenase activity"/>
    <property type="evidence" value="ECO:0000318"/>
    <property type="project" value="GO_Central"/>
</dbReference>
<dbReference type="GO" id="GO:0008210">
    <property type="term" value="P:estrogen metabolic process"/>
    <property type="evidence" value="ECO:0000250"/>
    <property type="project" value="UniProtKB"/>
</dbReference>
<dbReference type="GO" id="GO:0006631">
    <property type="term" value="P:fatty acid metabolic process"/>
    <property type="evidence" value="ECO:0007669"/>
    <property type="project" value="UniProtKB-UniPathway"/>
</dbReference>
<dbReference type="GO" id="GO:0042572">
    <property type="term" value="P:retinol metabolic process"/>
    <property type="evidence" value="ECO:0000250"/>
    <property type="project" value="UniProtKB"/>
</dbReference>
<dbReference type="GO" id="GO:0006694">
    <property type="term" value="P:steroid biosynthetic process"/>
    <property type="evidence" value="ECO:0007669"/>
    <property type="project" value="UniProtKB-KW"/>
</dbReference>
<dbReference type="CDD" id="cd20676">
    <property type="entry name" value="CYP1A"/>
    <property type="match status" value="1"/>
</dbReference>
<dbReference type="FunFam" id="1.10.630.10:FF:000002">
    <property type="entry name" value="Cytochrome P450 1A1"/>
    <property type="match status" value="1"/>
</dbReference>
<dbReference type="Gene3D" id="1.10.630.10">
    <property type="entry name" value="Cytochrome P450"/>
    <property type="match status" value="1"/>
</dbReference>
<dbReference type="InterPro" id="IPR001128">
    <property type="entry name" value="Cyt_P450"/>
</dbReference>
<dbReference type="InterPro" id="IPR017972">
    <property type="entry name" value="Cyt_P450_CS"/>
</dbReference>
<dbReference type="InterPro" id="IPR002401">
    <property type="entry name" value="Cyt_P450_E_grp-I"/>
</dbReference>
<dbReference type="InterPro" id="IPR008066">
    <property type="entry name" value="Cyt_P450_E_grp-I_CYP1"/>
</dbReference>
<dbReference type="InterPro" id="IPR036396">
    <property type="entry name" value="Cyt_P450_sf"/>
</dbReference>
<dbReference type="PANTHER" id="PTHR24289:SF21">
    <property type="entry name" value="CYTOCHROME P450 1A"/>
    <property type="match status" value="1"/>
</dbReference>
<dbReference type="PANTHER" id="PTHR24289">
    <property type="entry name" value="STEROID 17-ALPHA-HYDROXYLASE/17,20 LYASE"/>
    <property type="match status" value="1"/>
</dbReference>
<dbReference type="Pfam" id="PF00067">
    <property type="entry name" value="p450"/>
    <property type="match status" value="1"/>
</dbReference>
<dbReference type="PRINTS" id="PR00463">
    <property type="entry name" value="EP450I"/>
</dbReference>
<dbReference type="PRINTS" id="PR01683">
    <property type="entry name" value="EP450ICYP1A"/>
</dbReference>
<dbReference type="PRINTS" id="PR00385">
    <property type="entry name" value="P450"/>
</dbReference>
<dbReference type="SUPFAM" id="SSF48264">
    <property type="entry name" value="Cytochrome P450"/>
    <property type="match status" value="1"/>
</dbReference>
<dbReference type="PROSITE" id="PS00086">
    <property type="entry name" value="CYTOCHROME_P450"/>
    <property type="match status" value="1"/>
</dbReference>
<organism>
    <name type="scientific">Canis lupus familiaris</name>
    <name type="common">Dog</name>
    <name type="synonym">Canis familiaris</name>
    <dbReference type="NCBI Taxonomy" id="9615"/>
    <lineage>
        <taxon>Eukaryota</taxon>
        <taxon>Metazoa</taxon>
        <taxon>Chordata</taxon>
        <taxon>Craniata</taxon>
        <taxon>Vertebrata</taxon>
        <taxon>Euteleostomi</taxon>
        <taxon>Mammalia</taxon>
        <taxon>Eutheria</taxon>
        <taxon>Laurasiatheria</taxon>
        <taxon>Carnivora</taxon>
        <taxon>Caniformia</taxon>
        <taxon>Canidae</taxon>
        <taxon>Canis</taxon>
    </lineage>
</organism>
<gene>
    <name type="primary">CYP1A1</name>
</gene>
<proteinExistence type="evidence at transcript level"/>
<sequence length="524" mass="59209">MMSMFRLSIPISASELLLASTVFCLVLWVVKAWQPRLPKGLKSPPGPWGWPVLGNVLTLGKSPHLALSRLSQRYGDVLQIRIGSTPVLVLSGLDTIRQALVRQGDDFKGRPDLYSFSLVTDGQSLTFSPDSGPVWAARRRLAQNALKSFSIASDPASSCSCYLEEHVSKEAEVLLSRLQEQMAEVGRFDPYRYIVVSVANVICAMCFSKRYDHDDQELLSLVNLSNEFGEGVASANPLDFFPILRYLPNPALDFFKDLNKRFYSFMQKMVKEHYKTFEKGQIRDVTDSLIEHCQDKRLDENANIQLSDEKIVNVVLDLFGAGFDTVTTAISWSLLYLVTNPNVQKKIQKELDTVIGRARQPRLSDRPQLPYMEAFILETFRHASFVPFTIPHSTTRDTSLSGFYIPKGRCVFVNQWQINHDQKLWGNPSEFQPERFLTLDGTINKALSEKVILFGLGKRKCIGETIARLEVFLFLAILLQQVEFSVPEGTKVDMTPIYGLTMKHARCEHFQVRVRTEGAESPAA</sequence>
<feature type="chain" id="PRO_0000051625" description="Cytochrome P450 1A1">
    <location>
        <begin position="1"/>
        <end position="524"/>
    </location>
</feature>
<feature type="region of interest" description="Mitochondrial targeting signal" evidence="2">
    <location>
        <begin position="33"/>
        <end position="44"/>
    </location>
</feature>
<feature type="binding site" evidence="1">
    <location>
        <position position="228"/>
    </location>
    <ligand>
        <name>substrate</name>
    </ligand>
</feature>
<feature type="binding site" description="axial binding residue" evidence="1">
    <location>
        <position position="461"/>
    </location>
    <ligand>
        <name>heme</name>
        <dbReference type="ChEBI" id="CHEBI:30413"/>
    </ligand>
    <ligandPart>
        <name>Fe</name>
        <dbReference type="ChEBI" id="CHEBI:18248"/>
    </ligandPart>
</feature>
<feature type="glycosylation site" description="O-linked (GlcNAc) serine" evidence="1">
    <location>
        <position position="71"/>
    </location>
</feature>
<keyword id="KW-0963">Cytoplasm</keyword>
<keyword id="KW-0256">Endoplasmic reticulum</keyword>
<keyword id="KW-0325">Glycoprotein</keyword>
<keyword id="KW-0349">Heme</keyword>
<keyword id="KW-0408">Iron</keyword>
<keyword id="KW-0444">Lipid biosynthesis</keyword>
<keyword id="KW-0443">Lipid metabolism</keyword>
<keyword id="KW-0456">Lyase</keyword>
<keyword id="KW-0472">Membrane</keyword>
<keyword id="KW-0479">Metal-binding</keyword>
<keyword id="KW-0492">Microsome</keyword>
<keyword id="KW-0496">Mitochondrion</keyword>
<keyword id="KW-0999">Mitochondrion inner membrane</keyword>
<keyword id="KW-0503">Monooxygenase</keyword>
<keyword id="KW-0560">Oxidoreductase</keyword>
<keyword id="KW-1185">Reference proteome</keyword>
<keyword id="KW-0752">Steroid biosynthesis</keyword>
<evidence type="ECO:0000250" key="1"/>
<evidence type="ECO:0000250" key="2">
    <source>
        <dbReference type="UniProtKB" id="P00185"/>
    </source>
</evidence>
<evidence type="ECO:0000250" key="3">
    <source>
        <dbReference type="UniProtKB" id="P04798"/>
    </source>
</evidence>
<evidence type="ECO:0000305" key="4"/>
<protein>
    <recommendedName>
        <fullName>Cytochrome P450 1A1</fullName>
        <ecNumber evidence="3">1.14.14.1</ecNumber>
    </recommendedName>
    <alternativeName>
        <fullName>CYPIA1</fullName>
    </alternativeName>
    <alternativeName>
        <fullName>Cytochrome P450 form 6</fullName>
    </alternativeName>
    <alternativeName>
        <fullName>Cytochrome P450-C</fullName>
    </alternativeName>
    <alternativeName>
        <fullName>Cytochrome P450-P1</fullName>
    </alternativeName>
    <alternativeName>
        <fullName>DAH1</fullName>
    </alternativeName>
    <alternativeName>
        <fullName>Hydroperoxy icosatetraenoate dehydratase</fullName>
        <ecNumber evidence="3">4.2.1.152</ecNumber>
    </alternativeName>
</protein>
<comment type="function">
    <text evidence="3">A cytochrome P450 monooxygenase involved in the metabolism of various endogenous substrates, including fatty acids, steroid hormones and vitamins. Mechanistically, uses molecular oxygen inserting one oxygen atom into a substrate, and reducing the second into a water molecule, with two electrons provided by NADPH via cytochrome P450 reductase (CPR; NADPH-ferrihemoprotein reductase). Catalyzes the hydroxylation of carbon-hydrogen bonds. Exhibits high catalytic activity for the formation of hydroxyestrogens from estrone (E1) and 17beta-estradiol (E2), namely 2-hydroxy E1 and E2, as well as D-ring hydroxylated E1 and E2 at the C15alpha and C16alpha positions. Displays different regioselectivities for polyunsaturated fatty acids (PUFA) hydroxylation. Catalyzes the epoxidation of double bonds of certain PUFA. Converts arachidonic acid toward epoxyeicosatrienoic acid (EET) regioisomers, 8,9-, 11,12-, and 14,15-EET, that function as lipid mediators in the vascular system. Displays an absolute stereoselectivity in the epoxidation of eicosapentaenoic acid (EPA) producing the 17(R),18(S) enantiomer. May play an important role in all-trans retinoic acid biosynthesis in extrahepatic tissues. Catalyzes two successive oxidative transformation of all-trans retinol to all-trans retinal and then to the active form all-trans retinoic acid. May also participate in eicosanoids metabolism by converting hydroperoxide species into oxo metabolites (lipoxygenase-like reaction, NADPH-independent).</text>
</comment>
<comment type="catalytic activity">
    <reaction evidence="3">
        <text>an organic molecule + reduced [NADPH--hemoprotein reductase] + O2 = an alcohol + oxidized [NADPH--hemoprotein reductase] + H2O + H(+)</text>
        <dbReference type="Rhea" id="RHEA:17149"/>
        <dbReference type="Rhea" id="RHEA-COMP:11964"/>
        <dbReference type="Rhea" id="RHEA-COMP:11965"/>
        <dbReference type="ChEBI" id="CHEBI:15377"/>
        <dbReference type="ChEBI" id="CHEBI:15378"/>
        <dbReference type="ChEBI" id="CHEBI:15379"/>
        <dbReference type="ChEBI" id="CHEBI:30879"/>
        <dbReference type="ChEBI" id="CHEBI:57618"/>
        <dbReference type="ChEBI" id="CHEBI:58210"/>
        <dbReference type="ChEBI" id="CHEBI:142491"/>
        <dbReference type="EC" id="1.14.14.1"/>
    </reaction>
    <physiologicalReaction direction="right-to-left" evidence="3">
        <dbReference type="Rhea" id="RHEA:17151"/>
    </physiologicalReaction>
</comment>
<comment type="catalytic activity">
    <reaction evidence="3">
        <text>estrone + reduced [NADPH--hemoprotein reductase] + O2 = 2-hydroxyestrone + oxidized [NADPH--hemoprotein reductase] + H2O + H(+)</text>
        <dbReference type="Rhea" id="RHEA:47208"/>
        <dbReference type="Rhea" id="RHEA-COMP:11964"/>
        <dbReference type="Rhea" id="RHEA-COMP:11965"/>
        <dbReference type="ChEBI" id="CHEBI:1156"/>
        <dbReference type="ChEBI" id="CHEBI:15377"/>
        <dbReference type="ChEBI" id="CHEBI:15378"/>
        <dbReference type="ChEBI" id="CHEBI:15379"/>
        <dbReference type="ChEBI" id="CHEBI:17263"/>
        <dbReference type="ChEBI" id="CHEBI:57618"/>
        <dbReference type="ChEBI" id="CHEBI:58210"/>
    </reaction>
    <physiologicalReaction direction="left-to-right" evidence="3">
        <dbReference type="Rhea" id="RHEA:47209"/>
    </physiologicalReaction>
</comment>
<comment type="catalytic activity">
    <reaction evidence="3">
        <text>estrone + reduced [NADPH--hemoprotein reductase] + O2 = 4-hydroxyestrone + oxidized [NADPH--hemoprotein reductase] + H2O + H(+)</text>
        <dbReference type="Rhea" id="RHEA:47292"/>
        <dbReference type="Rhea" id="RHEA-COMP:11964"/>
        <dbReference type="Rhea" id="RHEA-COMP:11965"/>
        <dbReference type="ChEBI" id="CHEBI:15377"/>
        <dbReference type="ChEBI" id="CHEBI:15378"/>
        <dbReference type="ChEBI" id="CHEBI:15379"/>
        <dbReference type="ChEBI" id="CHEBI:17263"/>
        <dbReference type="ChEBI" id="CHEBI:57618"/>
        <dbReference type="ChEBI" id="CHEBI:58210"/>
        <dbReference type="ChEBI" id="CHEBI:87602"/>
    </reaction>
    <physiologicalReaction direction="left-to-right" evidence="3">
        <dbReference type="Rhea" id="RHEA:47293"/>
    </physiologicalReaction>
</comment>
<comment type="catalytic activity">
    <reaction evidence="3">
        <text>estrone + reduced [NADPH--hemoprotein reductase] + O2 = 6alpha-hydroxyestrone + oxidized [NADPH--hemoprotein reductase] + H2O + H(+)</text>
        <dbReference type="Rhea" id="RHEA:47308"/>
        <dbReference type="Rhea" id="RHEA-COMP:11964"/>
        <dbReference type="Rhea" id="RHEA-COMP:11965"/>
        <dbReference type="ChEBI" id="CHEBI:15377"/>
        <dbReference type="ChEBI" id="CHEBI:15378"/>
        <dbReference type="ChEBI" id="CHEBI:15379"/>
        <dbReference type="ChEBI" id="CHEBI:17263"/>
        <dbReference type="ChEBI" id="CHEBI:57618"/>
        <dbReference type="ChEBI" id="CHEBI:58210"/>
        <dbReference type="ChEBI" id="CHEBI:87605"/>
    </reaction>
    <physiologicalReaction direction="left-to-right" evidence="3">
        <dbReference type="Rhea" id="RHEA:47309"/>
    </physiologicalReaction>
</comment>
<comment type="catalytic activity">
    <reaction evidence="3">
        <text>estrone + reduced [NADPH--hemoprotein reductase] + O2 = 15alpha-hydroxyestrone + oxidized [NADPH--hemoprotein reductase] + H2O + H(+)</text>
        <dbReference type="Rhea" id="RHEA:47312"/>
        <dbReference type="Rhea" id="RHEA-COMP:11964"/>
        <dbReference type="Rhea" id="RHEA-COMP:11965"/>
        <dbReference type="ChEBI" id="CHEBI:15377"/>
        <dbReference type="ChEBI" id="CHEBI:15378"/>
        <dbReference type="ChEBI" id="CHEBI:15379"/>
        <dbReference type="ChEBI" id="CHEBI:17263"/>
        <dbReference type="ChEBI" id="CHEBI:57618"/>
        <dbReference type="ChEBI" id="CHEBI:58210"/>
        <dbReference type="ChEBI" id="CHEBI:87618"/>
    </reaction>
    <physiologicalReaction direction="left-to-right" evidence="3">
        <dbReference type="Rhea" id="RHEA:47313"/>
    </physiologicalReaction>
</comment>
<comment type="catalytic activity">
    <reaction evidence="3">
        <text>estrone + reduced [NADPH--hemoprotein reductase] + O2 = 16alpha-hydroxyestrone + oxidized [NADPH--hemoprotein reductase] + H2O + H(+)</text>
        <dbReference type="Rhea" id="RHEA:47204"/>
        <dbReference type="Rhea" id="RHEA-COMP:11964"/>
        <dbReference type="Rhea" id="RHEA-COMP:11965"/>
        <dbReference type="ChEBI" id="CHEBI:776"/>
        <dbReference type="ChEBI" id="CHEBI:15377"/>
        <dbReference type="ChEBI" id="CHEBI:15378"/>
        <dbReference type="ChEBI" id="CHEBI:15379"/>
        <dbReference type="ChEBI" id="CHEBI:17263"/>
        <dbReference type="ChEBI" id="CHEBI:57618"/>
        <dbReference type="ChEBI" id="CHEBI:58210"/>
    </reaction>
    <physiologicalReaction direction="left-to-right" evidence="3">
        <dbReference type="Rhea" id="RHEA:47205"/>
    </physiologicalReaction>
</comment>
<comment type="catalytic activity">
    <reaction evidence="3">
        <text>17beta-estradiol + reduced [NADPH--hemoprotein reductase] + O2 = 2-hydroxy-17beta-estradiol + oxidized [NADPH--hemoprotein reductase] + H2O + H(+)</text>
        <dbReference type="Rhea" id="RHEA:47212"/>
        <dbReference type="Rhea" id="RHEA-COMP:11964"/>
        <dbReference type="Rhea" id="RHEA-COMP:11965"/>
        <dbReference type="ChEBI" id="CHEBI:15377"/>
        <dbReference type="ChEBI" id="CHEBI:15378"/>
        <dbReference type="ChEBI" id="CHEBI:15379"/>
        <dbReference type="ChEBI" id="CHEBI:16469"/>
        <dbReference type="ChEBI" id="CHEBI:28744"/>
        <dbReference type="ChEBI" id="CHEBI:57618"/>
        <dbReference type="ChEBI" id="CHEBI:58210"/>
    </reaction>
    <physiologicalReaction direction="left-to-right" evidence="3">
        <dbReference type="Rhea" id="RHEA:47213"/>
    </physiologicalReaction>
</comment>
<comment type="catalytic activity">
    <reaction evidence="3">
        <text>17beta-estradiol + reduced [NADPH--hemoprotein reductase] + O2 = 4-hydroxy-17beta-estradiol + oxidized [NADPH--hemoprotein reductase] + H2O + H(+)</text>
        <dbReference type="Rhea" id="RHEA:47280"/>
        <dbReference type="Rhea" id="RHEA-COMP:11964"/>
        <dbReference type="Rhea" id="RHEA-COMP:11965"/>
        <dbReference type="ChEBI" id="CHEBI:15377"/>
        <dbReference type="ChEBI" id="CHEBI:15378"/>
        <dbReference type="ChEBI" id="CHEBI:15379"/>
        <dbReference type="ChEBI" id="CHEBI:16469"/>
        <dbReference type="ChEBI" id="CHEBI:57618"/>
        <dbReference type="ChEBI" id="CHEBI:58210"/>
        <dbReference type="ChEBI" id="CHEBI:62845"/>
    </reaction>
    <physiologicalReaction direction="left-to-right" evidence="3">
        <dbReference type="Rhea" id="RHEA:47281"/>
    </physiologicalReaction>
</comment>
<comment type="catalytic activity">
    <reaction evidence="3">
        <text>17beta-estradiol + reduced [NADPH--hemoprotein reductase] + O2 = 6alpha-hydroxy-17beta-estradiol + oxidized [NADPH--hemoprotein reductase] + H2O + H(+)</text>
        <dbReference type="Rhea" id="RHEA:47284"/>
        <dbReference type="Rhea" id="RHEA-COMP:11964"/>
        <dbReference type="Rhea" id="RHEA-COMP:11965"/>
        <dbReference type="ChEBI" id="CHEBI:15377"/>
        <dbReference type="ChEBI" id="CHEBI:15378"/>
        <dbReference type="ChEBI" id="CHEBI:15379"/>
        <dbReference type="ChEBI" id="CHEBI:16469"/>
        <dbReference type="ChEBI" id="CHEBI:57618"/>
        <dbReference type="ChEBI" id="CHEBI:58210"/>
        <dbReference type="ChEBI" id="CHEBI:62847"/>
    </reaction>
    <physiologicalReaction direction="left-to-right" evidence="3">
        <dbReference type="Rhea" id="RHEA:47285"/>
    </physiologicalReaction>
</comment>
<comment type="catalytic activity">
    <reaction evidence="3">
        <text>17beta-estradiol + reduced [NADPH--hemoprotein reductase] + O2 = 7alpha-hydroxy-17beta-estradiol + oxidized [NADPH--hemoprotein reductase] + H2O + H(+)</text>
        <dbReference type="Rhea" id="RHEA:47288"/>
        <dbReference type="Rhea" id="RHEA-COMP:11964"/>
        <dbReference type="Rhea" id="RHEA-COMP:11965"/>
        <dbReference type="ChEBI" id="CHEBI:15377"/>
        <dbReference type="ChEBI" id="CHEBI:15378"/>
        <dbReference type="ChEBI" id="CHEBI:15379"/>
        <dbReference type="ChEBI" id="CHEBI:16469"/>
        <dbReference type="ChEBI" id="CHEBI:57618"/>
        <dbReference type="ChEBI" id="CHEBI:58210"/>
        <dbReference type="ChEBI" id="CHEBI:87598"/>
    </reaction>
    <physiologicalReaction direction="left-to-right" evidence="3">
        <dbReference type="Rhea" id="RHEA:47289"/>
    </physiologicalReaction>
</comment>
<comment type="catalytic activity">
    <reaction evidence="3">
        <text>17beta-estradiol + reduced [NADPH--hemoprotein reductase] + O2 = 15alpha-hydroxy-17beta-estradiol + oxidized [NADPH--hemoprotein reductase] + H2O + H(+)</text>
        <dbReference type="Rhea" id="RHEA:47276"/>
        <dbReference type="Rhea" id="RHEA-COMP:11964"/>
        <dbReference type="Rhea" id="RHEA-COMP:11965"/>
        <dbReference type="ChEBI" id="CHEBI:15377"/>
        <dbReference type="ChEBI" id="CHEBI:15378"/>
        <dbReference type="ChEBI" id="CHEBI:15379"/>
        <dbReference type="ChEBI" id="CHEBI:16469"/>
        <dbReference type="ChEBI" id="CHEBI:57618"/>
        <dbReference type="ChEBI" id="CHEBI:58210"/>
        <dbReference type="ChEBI" id="CHEBI:87593"/>
    </reaction>
    <physiologicalReaction direction="left-to-right" evidence="3">
        <dbReference type="Rhea" id="RHEA:47277"/>
    </physiologicalReaction>
</comment>
<comment type="catalytic activity">
    <reaction evidence="3">
        <text>(5Z,8Z,11Z)-eicosatrienoate + reduced [NADPH--hemoprotein reductase] + O2 = 19-hydroxy-(5Z,8Z,11Z)-eicosatrienoate + oxidized [NADPH--hemoprotein reductase] + H2O + H(+)</text>
        <dbReference type="Rhea" id="RHEA:50076"/>
        <dbReference type="Rhea" id="RHEA-COMP:11964"/>
        <dbReference type="Rhea" id="RHEA-COMP:11965"/>
        <dbReference type="ChEBI" id="CHEBI:15377"/>
        <dbReference type="ChEBI" id="CHEBI:15378"/>
        <dbReference type="ChEBI" id="CHEBI:15379"/>
        <dbReference type="ChEBI" id="CHEBI:57618"/>
        <dbReference type="ChEBI" id="CHEBI:58210"/>
        <dbReference type="ChEBI" id="CHEBI:78043"/>
        <dbReference type="ChEBI" id="CHEBI:132024"/>
    </reaction>
    <physiologicalReaction direction="left-to-right" evidence="3">
        <dbReference type="Rhea" id="RHEA:50077"/>
    </physiologicalReaction>
</comment>
<comment type="catalytic activity">
    <reaction evidence="3">
        <text>(5Z,8Z,11Z,14Z)-eicosatetraenoate + reduced [NADPH--hemoprotein reductase] + O2 = 16-hydroxy-(5Z,8Z,11Z,14Z)-eicosatetraenoate + oxidized [NADPH--hemoprotein reductase] + H2O + H(+)</text>
        <dbReference type="Rhea" id="RHEA:49972"/>
        <dbReference type="Rhea" id="RHEA-COMP:11964"/>
        <dbReference type="Rhea" id="RHEA-COMP:11965"/>
        <dbReference type="ChEBI" id="CHEBI:15377"/>
        <dbReference type="ChEBI" id="CHEBI:15378"/>
        <dbReference type="ChEBI" id="CHEBI:15379"/>
        <dbReference type="ChEBI" id="CHEBI:32395"/>
        <dbReference type="ChEBI" id="CHEBI:57618"/>
        <dbReference type="ChEBI" id="CHEBI:58210"/>
        <dbReference type="ChEBI" id="CHEBI:132019"/>
    </reaction>
    <physiologicalReaction direction="left-to-right" evidence="3">
        <dbReference type="Rhea" id="RHEA:49973"/>
    </physiologicalReaction>
</comment>
<comment type="catalytic activity">
    <reaction evidence="3">
        <text>(5Z,8Z,11Z,14Z)-eicosatetraenoate + reduced [NADPH--hemoprotein reductase] + O2 = 17-hydroxy-(5Z,8Z,11Z,14Z)-eicosatetraenoate + oxidized [NADPH--hemoprotein reductase] + H2O + H(+)</text>
        <dbReference type="Rhea" id="RHEA:49968"/>
        <dbReference type="Rhea" id="RHEA-COMP:11964"/>
        <dbReference type="Rhea" id="RHEA-COMP:11965"/>
        <dbReference type="ChEBI" id="CHEBI:15377"/>
        <dbReference type="ChEBI" id="CHEBI:15378"/>
        <dbReference type="ChEBI" id="CHEBI:15379"/>
        <dbReference type="ChEBI" id="CHEBI:32395"/>
        <dbReference type="ChEBI" id="CHEBI:57618"/>
        <dbReference type="ChEBI" id="CHEBI:58210"/>
        <dbReference type="ChEBI" id="CHEBI:132016"/>
    </reaction>
    <physiologicalReaction direction="left-to-right" evidence="3">
        <dbReference type="Rhea" id="RHEA:49969"/>
    </physiologicalReaction>
</comment>
<comment type="catalytic activity">
    <reaction evidence="3">
        <text>(5Z,8Z,11Z,14Z)-eicosatetraenoate + reduced [NADPH--hemoprotein reductase] + O2 = 18-hydroxy-(5Z,8Z,11Z,14Z)-eicosatetraenoate + oxidized [NADPH--hemoprotein reductase] + H2O + H(+)</text>
        <dbReference type="Rhea" id="RHEA:39811"/>
        <dbReference type="Rhea" id="RHEA-COMP:11964"/>
        <dbReference type="Rhea" id="RHEA-COMP:11965"/>
        <dbReference type="ChEBI" id="CHEBI:15377"/>
        <dbReference type="ChEBI" id="CHEBI:15378"/>
        <dbReference type="ChEBI" id="CHEBI:15379"/>
        <dbReference type="ChEBI" id="CHEBI:32395"/>
        <dbReference type="ChEBI" id="CHEBI:57618"/>
        <dbReference type="ChEBI" id="CHEBI:58210"/>
        <dbReference type="ChEBI" id="CHEBI:63590"/>
    </reaction>
    <physiologicalReaction direction="left-to-right" evidence="3">
        <dbReference type="Rhea" id="RHEA:39812"/>
    </physiologicalReaction>
</comment>
<comment type="catalytic activity">
    <reaction evidence="3">
        <text>(5Z,8Z,11Z,14Z)-eicosatetraenoate + reduced [NADPH--hemoprotein reductase] + O2 = 19-hydroxy-(5Z,8Z,11Z,14Z)-eicosatetraenoate + oxidized [NADPH--hemoprotein reductase] + H2O + H(+)</text>
        <dbReference type="Rhea" id="RHEA:39759"/>
        <dbReference type="Rhea" id="RHEA-COMP:11964"/>
        <dbReference type="Rhea" id="RHEA-COMP:11965"/>
        <dbReference type="ChEBI" id="CHEBI:15377"/>
        <dbReference type="ChEBI" id="CHEBI:15378"/>
        <dbReference type="ChEBI" id="CHEBI:15379"/>
        <dbReference type="ChEBI" id="CHEBI:32395"/>
        <dbReference type="ChEBI" id="CHEBI:57618"/>
        <dbReference type="ChEBI" id="CHEBI:58210"/>
        <dbReference type="ChEBI" id="CHEBI:76627"/>
    </reaction>
    <physiologicalReaction direction="left-to-right" evidence="3">
        <dbReference type="Rhea" id="RHEA:39760"/>
    </physiologicalReaction>
</comment>
<comment type="catalytic activity">
    <reaction evidence="3">
        <text>(5Z,8Z,11Z,14Z,17Z)-eicosapentaenoate + reduced [NADPH--hemoprotein reductase] + O2 = 19-hydroxy-(5Z,8Z,11Z,14Z,17Z)-eicosapentaenoate + oxidized [NADPH--hemoprotein reductase] + H2O + H(+)</text>
        <dbReference type="Rhea" id="RHEA:39787"/>
        <dbReference type="Rhea" id="RHEA-COMP:11964"/>
        <dbReference type="Rhea" id="RHEA-COMP:11965"/>
        <dbReference type="ChEBI" id="CHEBI:15377"/>
        <dbReference type="ChEBI" id="CHEBI:15378"/>
        <dbReference type="ChEBI" id="CHEBI:15379"/>
        <dbReference type="ChEBI" id="CHEBI:57618"/>
        <dbReference type="ChEBI" id="CHEBI:58210"/>
        <dbReference type="ChEBI" id="CHEBI:58562"/>
        <dbReference type="ChEBI" id="CHEBI:76636"/>
    </reaction>
    <physiologicalReaction direction="left-to-right" evidence="3">
        <dbReference type="Rhea" id="RHEA:39788"/>
    </physiologicalReaction>
</comment>
<comment type="catalytic activity">
    <reaction evidence="3">
        <text>(5Z,8Z,11Z,14Z)-eicosatetraenoate + reduced [NADPH--hemoprotein reductase] + O2 = (8R,9S)-epoxy-(5Z,11Z,14Z)-eicosatrienoate + oxidized [NADPH--hemoprotein reductase] + H2O + H(+)</text>
        <dbReference type="Rhea" id="RHEA:49884"/>
        <dbReference type="Rhea" id="RHEA-COMP:11964"/>
        <dbReference type="Rhea" id="RHEA-COMP:11965"/>
        <dbReference type="ChEBI" id="CHEBI:15377"/>
        <dbReference type="ChEBI" id="CHEBI:15378"/>
        <dbReference type="ChEBI" id="CHEBI:15379"/>
        <dbReference type="ChEBI" id="CHEBI:32395"/>
        <dbReference type="ChEBI" id="CHEBI:57618"/>
        <dbReference type="ChEBI" id="CHEBI:58210"/>
        <dbReference type="ChEBI" id="CHEBI:131975"/>
    </reaction>
    <physiologicalReaction direction="left-to-right" evidence="3">
        <dbReference type="Rhea" id="RHEA:49885"/>
    </physiologicalReaction>
</comment>
<comment type="catalytic activity">
    <reaction evidence="3">
        <text>(5Z,8Z,11Z,14Z)-eicosatetraenoate + reduced [NADPH--hemoprotein reductase] + O2 = (11R,12S)-epoxy-(5Z,8Z,14Z)-eicosatrienoate + oxidized [NADPH--hemoprotein reductase] + H2O + H(+)</text>
        <dbReference type="Rhea" id="RHEA:49880"/>
        <dbReference type="Rhea" id="RHEA-COMP:11964"/>
        <dbReference type="Rhea" id="RHEA-COMP:11965"/>
        <dbReference type="ChEBI" id="CHEBI:15377"/>
        <dbReference type="ChEBI" id="CHEBI:15378"/>
        <dbReference type="ChEBI" id="CHEBI:15379"/>
        <dbReference type="ChEBI" id="CHEBI:32395"/>
        <dbReference type="ChEBI" id="CHEBI:57618"/>
        <dbReference type="ChEBI" id="CHEBI:58210"/>
        <dbReference type="ChEBI" id="CHEBI:131970"/>
    </reaction>
    <physiologicalReaction direction="left-to-right" evidence="3">
        <dbReference type="Rhea" id="RHEA:49881"/>
    </physiologicalReaction>
</comment>
<comment type="catalytic activity">
    <reaction evidence="3">
        <text>(5Z,8Z,11Z,14Z)-eicosatetraenoate + reduced [NADPH--hemoprotein reductase] + O2 = (14S,15R)-epoxy-(5Z,8Z,11Z)-eicosatrienoate + oxidized [NADPH--hemoprotein reductase] + H2O + H(+)</text>
        <dbReference type="Rhea" id="RHEA:49856"/>
        <dbReference type="Rhea" id="RHEA-COMP:11964"/>
        <dbReference type="Rhea" id="RHEA-COMP:11965"/>
        <dbReference type="ChEBI" id="CHEBI:15377"/>
        <dbReference type="ChEBI" id="CHEBI:15378"/>
        <dbReference type="ChEBI" id="CHEBI:15379"/>
        <dbReference type="ChEBI" id="CHEBI:32395"/>
        <dbReference type="ChEBI" id="CHEBI:57618"/>
        <dbReference type="ChEBI" id="CHEBI:58210"/>
        <dbReference type="ChEBI" id="CHEBI:131964"/>
    </reaction>
    <physiologicalReaction direction="left-to-right" evidence="3">
        <dbReference type="Rhea" id="RHEA:49857"/>
    </physiologicalReaction>
</comment>
<comment type="catalytic activity">
    <reaction evidence="3">
        <text>(5Z,8Z,11Z,14Z)-eicosatetraenoate + reduced [NADPH--hemoprotein reductase] + O2 = (14R,15S)-epoxy-(5Z,8Z,11Z)-eicosatrienoate + oxidized [NADPH--hemoprotein reductase] + H2O + H(+)</text>
        <dbReference type="Rhea" id="RHEA:49860"/>
        <dbReference type="Rhea" id="RHEA-COMP:11964"/>
        <dbReference type="Rhea" id="RHEA-COMP:11965"/>
        <dbReference type="ChEBI" id="CHEBI:15377"/>
        <dbReference type="ChEBI" id="CHEBI:15378"/>
        <dbReference type="ChEBI" id="CHEBI:15379"/>
        <dbReference type="ChEBI" id="CHEBI:32395"/>
        <dbReference type="ChEBI" id="CHEBI:57618"/>
        <dbReference type="ChEBI" id="CHEBI:58210"/>
        <dbReference type="ChEBI" id="CHEBI:131965"/>
    </reaction>
    <physiologicalReaction direction="left-to-right" evidence="3">
        <dbReference type="Rhea" id="RHEA:49861"/>
    </physiologicalReaction>
</comment>
<comment type="catalytic activity">
    <reaction evidence="3">
        <text>(5Z,8Z,11Z,14Z,17Z)-eicosapentaenoate + reduced [NADPH--hemoprotein reductase] + O2 = (17R,18S)-epoxy-(5Z,8Z,11Z,14Z)-eicosatetraenoate + oxidized [NADPH--hemoprotein reductase] + H2O + H(+)</text>
        <dbReference type="Rhea" id="RHEA:39779"/>
        <dbReference type="Rhea" id="RHEA-COMP:11964"/>
        <dbReference type="Rhea" id="RHEA-COMP:11965"/>
        <dbReference type="ChEBI" id="CHEBI:15377"/>
        <dbReference type="ChEBI" id="CHEBI:15378"/>
        <dbReference type="ChEBI" id="CHEBI:15379"/>
        <dbReference type="ChEBI" id="CHEBI:57618"/>
        <dbReference type="ChEBI" id="CHEBI:58210"/>
        <dbReference type="ChEBI" id="CHEBI:58562"/>
        <dbReference type="ChEBI" id="CHEBI:76634"/>
    </reaction>
    <physiologicalReaction direction="left-to-right" evidence="3">
        <dbReference type="Rhea" id="RHEA:39780"/>
    </physiologicalReaction>
</comment>
<comment type="catalytic activity">
    <reaction evidence="3">
        <text>(4Z,7Z,10Z,13Z,16Z,19Z)-docosahexaenoate + reduced [NADPH--hemoprotein reductase] + O2 = (19S,20R)-epoxy-(4Z,7Z,10Z,13Z,16Z)-docosapentaenoate + oxidized [NADPH--hemoprotein reductase] + H2O + H(+)</text>
        <dbReference type="Rhea" id="RHEA:52124"/>
        <dbReference type="Rhea" id="RHEA-COMP:11964"/>
        <dbReference type="Rhea" id="RHEA-COMP:11965"/>
        <dbReference type="ChEBI" id="CHEBI:15377"/>
        <dbReference type="ChEBI" id="CHEBI:15378"/>
        <dbReference type="ChEBI" id="CHEBI:15379"/>
        <dbReference type="ChEBI" id="CHEBI:57618"/>
        <dbReference type="ChEBI" id="CHEBI:58210"/>
        <dbReference type="ChEBI" id="CHEBI:77016"/>
        <dbReference type="ChEBI" id="CHEBI:136411"/>
    </reaction>
    <physiologicalReaction direction="left-to-right" evidence="3">
        <dbReference type="Rhea" id="RHEA:52125"/>
    </physiologicalReaction>
</comment>
<comment type="catalytic activity">
    <reaction evidence="3">
        <text>(4Z,7Z,10Z,13Z,16Z,19Z)-docosahexaenoate + reduced [NADPH--hemoprotein reductase] + O2 = (19R,20S)-epoxy-(4Z,7Z,10Z,13Z,16Z)-docosapentaenoate + oxidized [NADPH--hemoprotein reductase] + H2O + H(+)</text>
        <dbReference type="Rhea" id="RHEA:52120"/>
        <dbReference type="Rhea" id="RHEA-COMP:11964"/>
        <dbReference type="Rhea" id="RHEA-COMP:11965"/>
        <dbReference type="ChEBI" id="CHEBI:15377"/>
        <dbReference type="ChEBI" id="CHEBI:15378"/>
        <dbReference type="ChEBI" id="CHEBI:15379"/>
        <dbReference type="ChEBI" id="CHEBI:57618"/>
        <dbReference type="ChEBI" id="CHEBI:58210"/>
        <dbReference type="ChEBI" id="CHEBI:77016"/>
        <dbReference type="ChEBI" id="CHEBI:136410"/>
    </reaction>
    <physiologicalReaction direction="left-to-right" evidence="3">
        <dbReference type="Rhea" id="RHEA:52121"/>
    </physiologicalReaction>
</comment>
<comment type="catalytic activity">
    <reaction evidence="3">
        <text>all-trans-retinol + reduced [NADPH--hemoprotein reductase] + O2 = all-trans-retinal + oxidized [NADPH--hemoprotein reductase] + 2 H2O + H(+)</text>
        <dbReference type="Rhea" id="RHEA:42092"/>
        <dbReference type="Rhea" id="RHEA-COMP:11964"/>
        <dbReference type="Rhea" id="RHEA-COMP:11965"/>
        <dbReference type="ChEBI" id="CHEBI:15377"/>
        <dbReference type="ChEBI" id="CHEBI:15378"/>
        <dbReference type="ChEBI" id="CHEBI:15379"/>
        <dbReference type="ChEBI" id="CHEBI:17336"/>
        <dbReference type="ChEBI" id="CHEBI:17898"/>
        <dbReference type="ChEBI" id="CHEBI:57618"/>
        <dbReference type="ChEBI" id="CHEBI:58210"/>
    </reaction>
    <physiologicalReaction direction="left-to-right" evidence="3">
        <dbReference type="Rhea" id="RHEA:42093"/>
    </physiologicalReaction>
</comment>
<comment type="catalytic activity">
    <reaction evidence="3">
        <text>all-trans-retinal + reduced [NADPH--hemoprotein reductase] + O2 = all-trans-retinoate + oxidized [NADPH--hemoprotein reductase] + H2O + 2 H(+)</text>
        <dbReference type="Rhea" id="RHEA:42088"/>
        <dbReference type="Rhea" id="RHEA-COMP:11964"/>
        <dbReference type="Rhea" id="RHEA-COMP:11965"/>
        <dbReference type="ChEBI" id="CHEBI:15377"/>
        <dbReference type="ChEBI" id="CHEBI:15378"/>
        <dbReference type="ChEBI" id="CHEBI:15379"/>
        <dbReference type="ChEBI" id="CHEBI:17898"/>
        <dbReference type="ChEBI" id="CHEBI:35291"/>
        <dbReference type="ChEBI" id="CHEBI:57618"/>
        <dbReference type="ChEBI" id="CHEBI:58210"/>
    </reaction>
    <physiologicalReaction direction="left-to-right" evidence="3">
        <dbReference type="Rhea" id="RHEA:42089"/>
    </physiologicalReaction>
</comment>
<comment type="catalytic activity">
    <reaction evidence="3">
        <text>(13S)-hydroperoxy-(9Z,11E)-octadecadienoate = 13-oxo-(9Z,11E)-octadecadienoate + H2O</text>
        <dbReference type="Rhea" id="RHEA:48716"/>
        <dbReference type="ChEBI" id="CHEBI:15377"/>
        <dbReference type="ChEBI" id="CHEBI:57466"/>
        <dbReference type="ChEBI" id="CHEBI:90781"/>
    </reaction>
    <physiologicalReaction direction="left-to-right" evidence="3">
        <dbReference type="Rhea" id="RHEA:48717"/>
    </physiologicalReaction>
</comment>
<comment type="catalytic activity">
    <reaction evidence="3">
        <text>(12S)-hydroperoxy-(5Z,8Z,10E,14Z)-eicosatetraenoate = 12-oxo-(5Z,8Z,10E,14Z)-eicosatetraenoate + H2O</text>
        <dbReference type="Rhea" id="RHEA:37947"/>
        <dbReference type="ChEBI" id="CHEBI:15377"/>
        <dbReference type="ChEBI" id="CHEBI:57444"/>
        <dbReference type="ChEBI" id="CHEBI:75231"/>
        <dbReference type="EC" id="4.2.1.152"/>
    </reaction>
    <physiologicalReaction direction="left-to-right" evidence="3">
        <dbReference type="Rhea" id="RHEA:37948"/>
    </physiologicalReaction>
</comment>
<comment type="catalytic activity">
    <reaction evidence="3">
        <text>(15S)-hydroperoxy-(5Z,8Z,11Z,13E)-eicosatetraenoate = 15-oxo-(5Z,8Z,11Z,13E)-eicosatetraenoate + H2O</text>
        <dbReference type="Rhea" id="RHEA:48636"/>
        <dbReference type="ChEBI" id="CHEBI:15377"/>
        <dbReference type="ChEBI" id="CHEBI:57410"/>
        <dbReference type="ChEBI" id="CHEBI:57446"/>
    </reaction>
    <physiologicalReaction direction="left-to-right" evidence="3">
        <dbReference type="Rhea" id="RHEA:48637"/>
    </physiologicalReaction>
</comment>
<comment type="catalytic activity">
    <reaction evidence="3">
        <text>(5S)-hydroperoxy-(6E,8Z,11Z,14Z)-eicosatetraenoate = 5-oxo-(6E,8Z,11Z,14Z)-eicosatetraenoate + H2O</text>
        <dbReference type="Rhea" id="RHEA:48632"/>
        <dbReference type="ChEBI" id="CHEBI:15377"/>
        <dbReference type="ChEBI" id="CHEBI:57450"/>
        <dbReference type="ChEBI" id="CHEBI:65342"/>
    </reaction>
    <physiologicalReaction direction="left-to-right" evidence="3">
        <dbReference type="Rhea" id="RHEA:48633"/>
    </physiologicalReaction>
</comment>
<comment type="cofactor">
    <cofactor evidence="1">
        <name>heme</name>
        <dbReference type="ChEBI" id="CHEBI:30413"/>
    </cofactor>
</comment>
<comment type="pathway">
    <text evidence="3">Steroid hormone biosynthesis.</text>
</comment>
<comment type="pathway">
    <text evidence="3">Lipid metabolism; fatty acid metabolism.</text>
</comment>
<comment type="pathway">
    <text evidence="3">Cofactor metabolism; retinol metabolism.</text>
</comment>
<comment type="subunit">
    <text evidence="2">Interacts with cytosolic chaperones HSP70 and HSP90; this interaction is required for initial targeting to mitochondria. Interacts (via mitochondrial targeting signal) with TOMM40 (via N-terminus); this interaction is required for translocation across the mitochondrial outer membrane.</text>
</comment>
<comment type="subcellular location">
    <subcellularLocation>
        <location evidence="2">Endoplasmic reticulum membrane</location>
        <topology evidence="2">Peripheral membrane protein</topology>
    </subcellularLocation>
    <subcellularLocation>
        <location evidence="2">Mitochondrion inner membrane</location>
        <topology evidence="2">Peripheral membrane protein</topology>
    </subcellularLocation>
    <subcellularLocation>
        <location evidence="2">Microsome membrane</location>
        <topology evidence="2">Peripheral membrane protein</topology>
    </subcellularLocation>
    <subcellularLocation>
        <location evidence="2">Cytoplasm</location>
    </subcellularLocation>
</comment>
<comment type="induction">
    <text>By polychlorinated biphenyl (PCB) in liver and kidney.</text>
</comment>
<comment type="similarity">
    <text evidence="4">Belongs to the cytochrome P450 family.</text>
</comment>
<comment type="caution">
    <text evidence="4">It is uncertain whether Met-1, Met-2 or Met-4 is the initiator.</text>
</comment>
<reference key="1">
    <citation type="journal article" date="1990" name="Mol. Pharmacol.">
        <title>Isolation of cDNAs coding for three different forms of liver microsomal cytochrome P-450 from polychlorinated biphenyl-treated beagle dogs.</title>
        <authorList>
            <person name="Uchida T."/>
            <person name="Komori M."/>
            <person name="Kitada M."/>
            <person name="Kamataki T."/>
        </authorList>
    </citation>
    <scope>NUCLEOTIDE SEQUENCE [MRNA]</scope>
    <source>
        <strain>Beagle</strain>
        <tissue>Liver</tissue>
    </source>
</reference>
<accession>P56590</accession>
<name>CP1A1_CANLF</name>